<dbReference type="EMBL" id="BC073714">
    <property type="protein sequence ID" value="AAH73714.1"/>
    <property type="molecule type" value="mRNA"/>
</dbReference>
<dbReference type="RefSeq" id="NP_001083094.1">
    <property type="nucleotide sequence ID" value="NM_001089625.1"/>
</dbReference>
<dbReference type="DIP" id="DIP-48588N"/>
<dbReference type="IntAct" id="Q6GN08">
    <property type="interactions" value="5"/>
</dbReference>
<dbReference type="DNASU" id="398742"/>
<dbReference type="GeneID" id="398742"/>
<dbReference type="KEGG" id="xla:398742"/>
<dbReference type="AGR" id="Xenbase:XB-GENE-990935"/>
<dbReference type="CTD" id="398742"/>
<dbReference type="Xenbase" id="XB-GENE-990935">
    <property type="gene designation" value="ncapd3.L"/>
</dbReference>
<dbReference type="OrthoDB" id="10263978at2759"/>
<dbReference type="Proteomes" id="UP000186698">
    <property type="component" value="Chromosome 7L"/>
</dbReference>
<dbReference type="Bgee" id="398742">
    <property type="expression patterns" value="Expressed in ovary and 15 other cell types or tissues"/>
</dbReference>
<dbReference type="GO" id="GO:0000779">
    <property type="term" value="C:condensed chromosome, centromeric region"/>
    <property type="evidence" value="ECO:0000318"/>
    <property type="project" value="GO_Central"/>
</dbReference>
<dbReference type="GO" id="GO:0000796">
    <property type="term" value="C:condensin complex"/>
    <property type="evidence" value="ECO:0000318"/>
    <property type="project" value="GO_Central"/>
</dbReference>
<dbReference type="GO" id="GO:0005634">
    <property type="term" value="C:nucleus"/>
    <property type="evidence" value="ECO:0007669"/>
    <property type="project" value="UniProtKB-SubCell"/>
</dbReference>
<dbReference type="GO" id="GO:0042393">
    <property type="term" value="F:histone binding"/>
    <property type="evidence" value="ECO:0000318"/>
    <property type="project" value="GO_Central"/>
</dbReference>
<dbReference type="GO" id="GO:0051301">
    <property type="term" value="P:cell division"/>
    <property type="evidence" value="ECO:0007669"/>
    <property type="project" value="UniProtKB-KW"/>
</dbReference>
<dbReference type="GO" id="GO:0010032">
    <property type="term" value="P:meiotic chromosome condensation"/>
    <property type="evidence" value="ECO:0000318"/>
    <property type="project" value="GO_Central"/>
</dbReference>
<dbReference type="GO" id="GO:0007076">
    <property type="term" value="P:mitotic chromosome condensation"/>
    <property type="evidence" value="ECO:0000318"/>
    <property type="project" value="GO_Central"/>
</dbReference>
<dbReference type="FunFam" id="1.25.10.10:FF:000319">
    <property type="entry name" value="Condensin-2 complex subunit D3"/>
    <property type="match status" value="1"/>
</dbReference>
<dbReference type="FunFam" id="1.25.10.10:FF:000345">
    <property type="entry name" value="Condensin-2 complex subunit D3"/>
    <property type="match status" value="1"/>
</dbReference>
<dbReference type="FunFam" id="1.25.10.10:FF:000613">
    <property type="entry name" value="Condensin-2 complex subunit D3"/>
    <property type="match status" value="1"/>
</dbReference>
<dbReference type="Gene3D" id="1.25.10.10">
    <property type="entry name" value="Leucine-rich Repeat Variant"/>
    <property type="match status" value="3"/>
</dbReference>
<dbReference type="InterPro" id="IPR011989">
    <property type="entry name" value="ARM-like"/>
</dbReference>
<dbReference type="InterPro" id="IPR016024">
    <property type="entry name" value="ARM-type_fold"/>
</dbReference>
<dbReference type="InterPro" id="IPR026971">
    <property type="entry name" value="CND1/NCAPD3"/>
</dbReference>
<dbReference type="InterPro" id="IPR032682">
    <property type="entry name" value="Cnd1_C"/>
</dbReference>
<dbReference type="InterPro" id="IPR012371">
    <property type="entry name" value="NCAPD3"/>
</dbReference>
<dbReference type="PANTHER" id="PTHR14222">
    <property type="entry name" value="CONDENSIN"/>
    <property type="match status" value="1"/>
</dbReference>
<dbReference type="PANTHER" id="PTHR14222:SF1">
    <property type="entry name" value="CONDENSIN-2 COMPLEX SUBUNIT D3"/>
    <property type="match status" value="1"/>
</dbReference>
<dbReference type="Pfam" id="PF12717">
    <property type="entry name" value="Cnd1"/>
    <property type="match status" value="1"/>
</dbReference>
<dbReference type="PIRSF" id="PIRSF036508">
    <property type="entry name" value="Condns_HCP-6"/>
    <property type="match status" value="1"/>
</dbReference>
<dbReference type="SUPFAM" id="SSF48371">
    <property type="entry name" value="ARM repeat"/>
    <property type="match status" value="1"/>
</dbReference>
<proteinExistence type="evidence at protein level"/>
<gene>
    <name evidence="7" type="primary">ncapd3.L</name>
    <name evidence="7" type="synonym">cap-d3</name>
    <name evidence="7" type="synonym">hcp-6</name>
    <name evidence="7" type="synonym">ncapd3</name>
</gene>
<feature type="chain" id="PRO_0000458418" description="Condensin-2 complex subunit D3-L">
    <location>
        <begin position="1"/>
        <end position="1492"/>
    </location>
</feature>
<feature type="repeat" description="HEAT 1" evidence="1">
    <location>
        <begin position="543"/>
        <end position="581"/>
    </location>
</feature>
<feature type="repeat" description="HEAT 2" evidence="1">
    <location>
        <begin position="583"/>
        <end position="619"/>
    </location>
</feature>
<feature type="repeat" description="HEAT 3" evidence="1">
    <location>
        <begin position="621"/>
        <end position="659"/>
    </location>
</feature>
<feature type="region of interest" description="Disordered" evidence="3">
    <location>
        <begin position="152"/>
        <end position="201"/>
    </location>
</feature>
<feature type="region of interest" description="Disordered" evidence="3">
    <location>
        <begin position="1269"/>
        <end position="1345"/>
    </location>
</feature>
<feature type="region of interest" description="Disordered" evidence="3">
    <location>
        <begin position="1359"/>
        <end position="1406"/>
    </location>
</feature>
<feature type="region of interest" description="Disordered" evidence="3">
    <location>
        <begin position="1454"/>
        <end position="1492"/>
    </location>
</feature>
<feature type="compositionally biased region" description="Acidic residues" evidence="3">
    <location>
        <begin position="189"/>
        <end position="201"/>
    </location>
</feature>
<feature type="compositionally biased region" description="Polar residues" evidence="3">
    <location>
        <begin position="1277"/>
        <end position="1290"/>
    </location>
</feature>
<feature type="compositionally biased region" description="Low complexity" evidence="3">
    <location>
        <begin position="1377"/>
        <end position="1388"/>
    </location>
</feature>
<sequence>MGDREAVLLEALSRCGLRGLSQAWVDSVWELDFTETEPLDSRIEAEITENGLETFSSLHENLLAFASEDPENSRSVWLLFSENDICRNSLVALLSHFIQAAANKKANAIQRILALNAAGLYFLLLEIPGSVANQVFHPVLFDKSVNALEKCWPRDPNASRKRKKDTLKSSQGDNRGGRKRPRPPRRDEQEMEDLSEEEQDEEEVYFSTRDLMHIRDSIFLVLKNFLRLLPKFSLKEKPQSVLHCIQIFINLTSFESVPQEMPFSDAVSVNHMKYVPELAYHGLWLLCLPIHGEGNQTVRRLFQRLLSVILMMKGGEGSNSALLVISPPVISARNQAIRFISFLVNELKEGTIPVLNILLQHICVKFPDKADYRVYAAQALVKLMENLPNAEYAIFIEWLYKYSKNSKISYRVFALEVVVALLDLPEREADVSLPHENLNFLQHKFLLQHMVFSRCSDKAPTVRSKALSCLAQCLEKNSTTAIDGVQELLQGSSCRTVFGTNITETTGNGTVYASNANEATTHPQKTMATLKIIEVSDTGDTLSSDGKEVLTMLRYRAGDEKTNVRKSALQVLVNVLKCHLIPCSSEDLSTLQDRCRDPAVSVRKQALTSLTELLLAQPHSVLIQKAWLTGLIPVVLDTESSVQEKALECLDQLLLQSITHYKRFKQDDERQKLTWDLLTLLTSESQDLSRYLTKAFHLWSKQDKFSSTFITNLISHTETEHTAPAWMILSKVAGSSPKLDYTKILQSWERVSRQTDADINTTGHILCVIGHIAKHLPADTRTHLIDHVKSWLKEFKSSPEVISPAVEALQKLCHAQTDKPEDVQDLLNDVCGEIVSACEHHISSVVMADCKDEPLDQDLLVKHLFTLGEVAQLCPAKVEKRVLLLVQSILASSVTTEQNSCHSDAEDPPVSQPLSQFKGSNMPSLIRAHAFITLGKLCLQHEDLAKKCIPALARELEVCDDVAIRNNVIIVICDLCIRYTTMVDRYIPNVSVCLRDRDPFIRKQTLIMLTNLLQEEFVKWKGSLFFRFVSVLVDPDPEIAKFGEFCLVHLLLKRNPVMFSQHFIECIFHFNCYEKHEKYNKFAQTKRERTLFSLKGKENKDKRMKIYKFLLEHFTDEQRFNLTTKISHNVLACFVDGILPIDMEANELLSDIFDIMSSKEIKLSAMRSKPGEDVGADDDEMAMANAVMQAAQKKLISQVQKKNFVENIIPIITSLKGFLEQHRIPAVRDLMNYLREMMQDYRDEIKDFFAADKQLAAELEYDMKKYEEQLEREQEENVQNPPSAESTGSPKGSPRAVNAISSPRSPNAPKSPLSTNAQTPGGAAPCTPITTPRVSILKGQGPRPRQMSLSTLAILNSARKAAQDNKKQRSKSIGAQPSTPSPARTTSSKQVTFRSEDQQSDSSLVGRMISTPDVTIENVTFGAGVSYISASQTPLSGRRGSIGSHEKERDVLCIMSPDKPAPQPRKWNVESPVQRRSIRQRISGKAPLKPSN</sequence>
<name>CND3L_XENLA</name>
<protein>
    <recommendedName>
        <fullName evidence="5">Condensin-2 complex subunit D3-L</fullName>
    </recommendedName>
</protein>
<keyword id="KW-0131">Cell cycle</keyword>
<keyword id="KW-0132">Cell division</keyword>
<keyword id="KW-0226">DNA condensation</keyword>
<keyword id="KW-0498">Mitosis</keyword>
<keyword id="KW-0539">Nucleus</keyword>
<keyword id="KW-1185">Reference proteome</keyword>
<keyword id="KW-0677">Repeat</keyword>
<reference evidence="6" key="1">
    <citation type="submission" date="2004-06" db="EMBL/GenBank/DDBJ databases">
        <authorList>
            <consortium name="NIH - Xenopus Gene Collection (XGC) project"/>
        </authorList>
    </citation>
    <scope>NUCLEOTIDE SEQUENCE [LARGE SCALE MRNA]</scope>
    <source>
        <tissue evidence="6">Oocyte</tissue>
    </source>
</reference>
<reference evidence="5" key="2">
    <citation type="journal article" date="2003" name="Cell">
        <title>Differential contributions of condensin I and condensin II to mitotic chromosome architecture in vertebrate cells.</title>
        <authorList>
            <person name="Ono T."/>
            <person name="Losada A."/>
            <person name="Hirano M."/>
            <person name="Myers M.P."/>
            <person name="Neuwald A.F."/>
            <person name="Hirano T."/>
        </authorList>
    </citation>
    <scope>IDENTIFICATION IN CONDENSIN-2 COMPLEX</scope>
    <scope>FUNCTION OF THE COMPLEX</scope>
</reference>
<organism evidence="6">
    <name type="scientific">Xenopus laevis</name>
    <name type="common">African clawed frog</name>
    <dbReference type="NCBI Taxonomy" id="8355"/>
    <lineage>
        <taxon>Eukaryota</taxon>
        <taxon>Metazoa</taxon>
        <taxon>Chordata</taxon>
        <taxon>Craniata</taxon>
        <taxon>Vertebrata</taxon>
        <taxon>Euteleostomi</taxon>
        <taxon>Amphibia</taxon>
        <taxon>Batrachia</taxon>
        <taxon>Anura</taxon>
        <taxon>Pipoidea</taxon>
        <taxon>Pipidae</taxon>
        <taxon>Xenopodinae</taxon>
        <taxon>Xenopus</taxon>
        <taxon>Xenopus</taxon>
    </lineage>
</organism>
<accession>Q6GN08</accession>
<comment type="function">
    <text evidence="2 4">Regulatory subunit of the condensin-2 complex, a complex which establishes mitotic chromosome architecture and is involved in physical rigidity of the chromatid axis.</text>
</comment>
<comment type="subunit">
    <text evidence="4">Component of the condensin-2 complex, which contains the smc2 and smc4 heterodimer, and three non SMC subunits, ncapg2, ncaph2 and ncapd3 that probably regulate the complex.</text>
</comment>
<comment type="interaction">
    <interactant intactId="EBI-15815299">
        <id>Q6GN08</id>
    </interactant>
    <interactant intactId="EBI-15815355">
        <id>Q641G4</id>
        <label>ncaph2</label>
    </interactant>
    <organismsDiffer>false</organismsDiffer>
    <experiments>3</experiments>
</comment>
<comment type="interaction">
    <interactant intactId="EBI-15815299">
        <id>Q6GN08</id>
    </interactant>
    <interactant intactId="EBI-3511283">
        <id>P50533</id>
        <label>smc2</label>
    </interactant>
    <organismsDiffer>false</organismsDiffer>
    <experiments>3</experiments>
</comment>
<comment type="subcellular location">
    <subcellularLocation>
        <location evidence="2">Nucleus</location>
    </subcellularLocation>
</comment>
<evidence type="ECO:0000255" key="1"/>
<evidence type="ECO:0000255" key="2">
    <source>
        <dbReference type="PIRNR" id="PIRNR036508"/>
    </source>
</evidence>
<evidence type="ECO:0000256" key="3">
    <source>
        <dbReference type="SAM" id="MobiDB-lite"/>
    </source>
</evidence>
<evidence type="ECO:0000269" key="4">
    <source>
    </source>
</evidence>
<evidence type="ECO:0000305" key="5"/>
<evidence type="ECO:0000312" key="6">
    <source>
        <dbReference type="EMBL" id="AAH73714.1"/>
    </source>
</evidence>
<evidence type="ECO:0000312" key="7">
    <source>
        <dbReference type="Xenbase" id="XB-GENE-990935"/>
    </source>
</evidence>